<accession>Q32384</accession>
<accession>Q1KXQ0</accession>
<geneLocation type="chloroplast"/>
<dbReference type="EC" id="7.1.1.-"/>
<dbReference type="EMBL" id="L39383">
    <property type="protein sequence ID" value="AAC37455.1"/>
    <property type="molecule type" value="Genomic_DNA"/>
</dbReference>
<dbReference type="EMBL" id="DQ383815">
    <property type="protein sequence ID" value="ABD47204.1"/>
    <property type="molecule type" value="Genomic_DNA"/>
</dbReference>
<dbReference type="PIR" id="T12614">
    <property type="entry name" value="T12614"/>
</dbReference>
<dbReference type="RefSeq" id="YP_588176.1">
    <property type="nucleotide sequence ID" value="NC_007977.1"/>
</dbReference>
<dbReference type="SMR" id="Q32384"/>
<dbReference type="EnsemblPlants" id="mRNA:HanXRQr2_Chr06g0273471">
    <property type="protein sequence ID" value="CDS:HanXRQr2_Chr06g0273471.1"/>
    <property type="gene ID" value="HanXRQr2_Chr06g0273471"/>
</dbReference>
<dbReference type="GeneID" id="4055631"/>
<dbReference type="Gramene" id="mRNA:HanXRQr2_Chr06g0273471">
    <property type="protein sequence ID" value="CDS:HanXRQr2_Chr06g0273471.1"/>
    <property type="gene ID" value="HanXRQr2_Chr06g0273471"/>
</dbReference>
<dbReference type="KEGG" id="han:4055631"/>
<dbReference type="OrthoDB" id="543408at2759"/>
<dbReference type="PhylomeDB" id="Q32384"/>
<dbReference type="GO" id="GO:0009535">
    <property type="term" value="C:chloroplast thylakoid membrane"/>
    <property type="evidence" value="ECO:0007669"/>
    <property type="project" value="UniProtKB-SubCell"/>
</dbReference>
<dbReference type="GO" id="GO:0008137">
    <property type="term" value="F:NADH dehydrogenase (ubiquinone) activity"/>
    <property type="evidence" value="ECO:0007669"/>
    <property type="project" value="InterPro"/>
</dbReference>
<dbReference type="GO" id="GO:0048038">
    <property type="term" value="F:quinone binding"/>
    <property type="evidence" value="ECO:0007669"/>
    <property type="project" value="UniProtKB-KW"/>
</dbReference>
<dbReference type="GO" id="GO:0042773">
    <property type="term" value="P:ATP synthesis coupled electron transport"/>
    <property type="evidence" value="ECO:0007669"/>
    <property type="project" value="InterPro"/>
</dbReference>
<dbReference type="Gene3D" id="1.20.5.2700">
    <property type="match status" value="1"/>
</dbReference>
<dbReference type="InterPro" id="IPR002128">
    <property type="entry name" value="NADH_UbQ_OxRdtase_chlpt_su5_C"/>
</dbReference>
<dbReference type="InterPro" id="IPR018393">
    <property type="entry name" value="NADHpl_OxRdtase_5_subgr"/>
</dbReference>
<dbReference type="InterPro" id="IPR001750">
    <property type="entry name" value="ND/Mrp_TM"/>
</dbReference>
<dbReference type="InterPro" id="IPR003945">
    <property type="entry name" value="NU5C-like"/>
</dbReference>
<dbReference type="InterPro" id="IPR001516">
    <property type="entry name" value="Proton_antipo_N"/>
</dbReference>
<dbReference type="NCBIfam" id="TIGR01974">
    <property type="entry name" value="NDH_I_L"/>
    <property type="match status" value="1"/>
</dbReference>
<dbReference type="NCBIfam" id="NF005141">
    <property type="entry name" value="PRK06590.1"/>
    <property type="match status" value="1"/>
</dbReference>
<dbReference type="PANTHER" id="PTHR42829">
    <property type="entry name" value="NADH-UBIQUINONE OXIDOREDUCTASE CHAIN 5"/>
    <property type="match status" value="1"/>
</dbReference>
<dbReference type="PANTHER" id="PTHR42829:SF2">
    <property type="entry name" value="NADH-UBIQUINONE OXIDOREDUCTASE CHAIN 5"/>
    <property type="match status" value="1"/>
</dbReference>
<dbReference type="Pfam" id="PF01010">
    <property type="entry name" value="Proton_antipo_C"/>
    <property type="match status" value="1"/>
</dbReference>
<dbReference type="Pfam" id="PF00361">
    <property type="entry name" value="Proton_antipo_M"/>
    <property type="match status" value="1"/>
</dbReference>
<dbReference type="Pfam" id="PF00662">
    <property type="entry name" value="Proton_antipo_N"/>
    <property type="match status" value="1"/>
</dbReference>
<dbReference type="PRINTS" id="PR01434">
    <property type="entry name" value="NADHDHGNASE5"/>
</dbReference>
<dbReference type="PRINTS" id="PR01435">
    <property type="entry name" value="NPOXDRDTASE5"/>
</dbReference>
<gene>
    <name type="primary">ndhF</name>
</gene>
<protein>
    <recommendedName>
        <fullName>NAD(P)H-quinone oxidoreductase subunit 5, chloroplastic</fullName>
        <ecNumber>7.1.1.-</ecNumber>
    </recommendedName>
    <alternativeName>
        <fullName>NAD(P)H dehydrogenase subunit 5</fullName>
    </alternativeName>
    <alternativeName>
        <fullName>NADH-plastoquinone oxidoreductase subunit 5</fullName>
    </alternativeName>
</protein>
<keyword id="KW-0150">Chloroplast</keyword>
<keyword id="KW-0472">Membrane</keyword>
<keyword id="KW-0520">NAD</keyword>
<keyword id="KW-0521">NADP</keyword>
<keyword id="KW-0934">Plastid</keyword>
<keyword id="KW-0618">Plastoquinone</keyword>
<keyword id="KW-0874">Quinone</keyword>
<keyword id="KW-0793">Thylakoid</keyword>
<keyword id="KW-1278">Translocase</keyword>
<keyword id="KW-0812">Transmembrane</keyword>
<keyword id="KW-1133">Transmembrane helix</keyword>
<keyword id="KW-0813">Transport</keyword>
<comment type="function">
    <text evidence="1">NDH shuttles electrons from NAD(P)H:plastoquinone, via FMN and iron-sulfur (Fe-S) centers, to quinones in the photosynthetic chain and possibly in a chloroplast respiratory chain. The immediate electron acceptor for the enzyme in this species is believed to be plastoquinone. Couples the redox reaction to proton translocation, and thus conserves the redox energy in a proton gradient (By similarity).</text>
</comment>
<comment type="catalytic activity">
    <reaction>
        <text>a plastoquinone + NADH + (n+1) H(+)(in) = a plastoquinol + NAD(+) + n H(+)(out)</text>
        <dbReference type="Rhea" id="RHEA:42608"/>
        <dbReference type="Rhea" id="RHEA-COMP:9561"/>
        <dbReference type="Rhea" id="RHEA-COMP:9562"/>
        <dbReference type="ChEBI" id="CHEBI:15378"/>
        <dbReference type="ChEBI" id="CHEBI:17757"/>
        <dbReference type="ChEBI" id="CHEBI:57540"/>
        <dbReference type="ChEBI" id="CHEBI:57945"/>
        <dbReference type="ChEBI" id="CHEBI:62192"/>
    </reaction>
</comment>
<comment type="catalytic activity">
    <reaction>
        <text>a plastoquinone + NADPH + (n+1) H(+)(in) = a plastoquinol + NADP(+) + n H(+)(out)</text>
        <dbReference type="Rhea" id="RHEA:42612"/>
        <dbReference type="Rhea" id="RHEA-COMP:9561"/>
        <dbReference type="Rhea" id="RHEA-COMP:9562"/>
        <dbReference type="ChEBI" id="CHEBI:15378"/>
        <dbReference type="ChEBI" id="CHEBI:17757"/>
        <dbReference type="ChEBI" id="CHEBI:57783"/>
        <dbReference type="ChEBI" id="CHEBI:58349"/>
        <dbReference type="ChEBI" id="CHEBI:62192"/>
    </reaction>
</comment>
<comment type="subunit">
    <text evidence="1">NDH is composed of at least 16 different subunits, 5 of which are encoded in the nucleus.</text>
</comment>
<comment type="subcellular location">
    <subcellularLocation>
        <location evidence="1">Plastid</location>
        <location evidence="1">Chloroplast thylakoid membrane</location>
        <topology evidence="1">Multi-pass membrane protein</topology>
    </subcellularLocation>
</comment>
<comment type="similarity">
    <text evidence="3">Belongs to the complex I subunit 5 family.</text>
</comment>
<reference key="1">
    <citation type="journal article" date="1995" name="Proc. Natl. Acad. Sci. U.S.A.">
        <title>ndhF sequence evolution and the major clades in the sunflower family.</title>
        <authorList>
            <person name="Kim K.-J."/>
            <person name="Jansen R.K."/>
        </authorList>
    </citation>
    <scope>NUCLEOTIDE SEQUENCE [GENOMIC DNA]</scope>
</reference>
<reference key="2">
    <citation type="submission" date="2006-01" db="EMBL/GenBank/DDBJ databases">
        <title>A comparison of the first two published chloroplast genomes in Asteraceae: Lactuca and Helianthus.</title>
        <authorList>
            <person name="Timme R.E."/>
            <person name="Kuehl J.V."/>
            <person name="Boore J.L."/>
            <person name="Jansen R.K."/>
        </authorList>
    </citation>
    <scope>NUCLEOTIDE SEQUENCE [LARGE SCALE GENOMIC DNA]</scope>
    <source>
        <strain>cv. HA383</strain>
    </source>
</reference>
<organism>
    <name type="scientific">Helianthus annuus</name>
    <name type="common">Common sunflower</name>
    <dbReference type="NCBI Taxonomy" id="4232"/>
    <lineage>
        <taxon>Eukaryota</taxon>
        <taxon>Viridiplantae</taxon>
        <taxon>Streptophyta</taxon>
        <taxon>Embryophyta</taxon>
        <taxon>Tracheophyta</taxon>
        <taxon>Spermatophyta</taxon>
        <taxon>Magnoliopsida</taxon>
        <taxon>eudicotyledons</taxon>
        <taxon>Gunneridae</taxon>
        <taxon>Pentapetalae</taxon>
        <taxon>asterids</taxon>
        <taxon>campanulids</taxon>
        <taxon>Asterales</taxon>
        <taxon>Asteraceae</taxon>
        <taxon>Asteroideae</taxon>
        <taxon>Heliantheae alliance</taxon>
        <taxon>Heliantheae</taxon>
        <taxon>Helianthus</taxon>
    </lineage>
</organism>
<name>NU5C_HELAN</name>
<sequence>MEQTYQYAWIIPFLPLPVPMLIGLGLLLFPTATKSLRRMWAFQSVLLLSIVMIFSLNLSIQQINSSSVYQYVWSWIINNDFSLEFGYLIDPLTSIMSILITTVGIMVLIYSDNYMSHDHGYLRFFAYMSFFSTSMLGLVTSSNLIQIYIFWELVGMCSYLLIGFWFTRPVAAKACQKAFVTNRVGDFGLLLGILGFYWITGSFEFRDLFQIFNNLISNNEVNSVFVTLCAVLLFAGAIAKSAQFPLHVWLPDAMEGPTPISALIHAATMVAAGIFLVARLMPLFIVIPHIMNFISFIGIITVFFGATLALAQKDIKRGLAYSTMSQLGYMMLALGMGSYRSALFHLITHAYSKALLFLGSGSVIHSMETLVGYCPKKSQNMVLMGGLKKHVPITKNSFLLGTLSLCGIPPLACFWSKDEILNDSWLYSPIFAIIAWSTAGFTAFYMCRIYLLTFEGHLNVHFQNYSGKRNTPLYLISLWGKEGSKISNKNLNFCLVTLLKMNKNGRPSFFSNKVYKMDENGRNLIQPFLSIPNFSNTKTSLYPYESDNTMLFPILILILFTLFVGFLGIPFNQDVDILSKWLTPSINLLHQSSNNSIDWYEFCKDAVFSVSIACFGIYIAFFLYKPVYSSFQNLDLINSVVKMGPKRIFSDKIKNAIYDWSYNRGYIDAFYGTFFTAGVRKLAEFTHFFDRRIIDGIPNGVGFMSFFVAEVIKSVGGGRISSYLFFYFSYVSIFLLIYYFLNL</sequence>
<evidence type="ECO:0000250" key="1"/>
<evidence type="ECO:0000255" key="2"/>
<evidence type="ECO:0000305" key="3"/>
<proteinExistence type="inferred from homology"/>
<feature type="chain" id="PRO_0000118185" description="NAD(P)H-quinone oxidoreductase subunit 5, chloroplastic">
    <location>
        <begin position="1"/>
        <end position="743"/>
    </location>
</feature>
<feature type="transmembrane region" description="Helical" evidence="2">
    <location>
        <begin position="9"/>
        <end position="29"/>
    </location>
</feature>
<feature type="transmembrane region" description="Helical" evidence="2">
    <location>
        <begin position="40"/>
        <end position="60"/>
    </location>
</feature>
<feature type="transmembrane region" description="Helical" evidence="2">
    <location>
        <begin position="89"/>
        <end position="109"/>
    </location>
</feature>
<feature type="transmembrane region" description="Helical" evidence="2">
    <location>
        <begin position="125"/>
        <end position="145"/>
    </location>
</feature>
<feature type="transmembrane region" description="Helical" evidence="2">
    <location>
        <begin position="147"/>
        <end position="167"/>
    </location>
</feature>
<feature type="transmembrane region" description="Helical" evidence="2">
    <location>
        <begin position="185"/>
        <end position="205"/>
    </location>
</feature>
<feature type="transmembrane region" description="Helical" evidence="2">
    <location>
        <begin position="224"/>
        <end position="244"/>
    </location>
</feature>
<feature type="transmembrane region" description="Helical" evidence="2">
    <location>
        <begin position="258"/>
        <end position="278"/>
    </location>
</feature>
<feature type="transmembrane region" description="Helical" evidence="2">
    <location>
        <begin position="284"/>
        <end position="304"/>
    </location>
</feature>
<feature type="transmembrane region" description="Helical" evidence="2">
    <location>
        <begin position="327"/>
        <end position="347"/>
    </location>
</feature>
<feature type="transmembrane region" description="Helical" evidence="2">
    <location>
        <begin position="354"/>
        <end position="374"/>
    </location>
</feature>
<feature type="transmembrane region" description="Helical" evidence="2">
    <location>
        <begin position="396"/>
        <end position="416"/>
    </location>
</feature>
<feature type="transmembrane region" description="Helical" evidence="2">
    <location>
        <begin position="425"/>
        <end position="445"/>
    </location>
</feature>
<feature type="transmembrane region" description="Helical" evidence="2">
    <location>
        <begin position="551"/>
        <end position="571"/>
    </location>
</feature>
<feature type="transmembrane region" description="Helical" evidence="2">
    <location>
        <begin position="607"/>
        <end position="627"/>
    </location>
</feature>
<feature type="transmembrane region" description="Helical" evidence="2">
    <location>
        <begin position="723"/>
        <end position="743"/>
    </location>
</feature>
<feature type="sequence conflict" description="In Ref. 1; AAC37455." evidence="3" ref="1">
    <original>F</original>
    <variation>L</variation>
    <location>
        <position position="296"/>
    </location>
</feature>
<feature type="sequence conflict" description="In Ref. 1; AAC37455." evidence="3" ref="1">
    <original>Y</original>
    <variation>D</variation>
    <location>
        <position position="445"/>
    </location>
</feature>
<feature type="sequence conflict" description="In Ref. 1; AAC37455." evidence="3" ref="1">
    <original>S</original>
    <variation>V</variation>
    <location>
        <position position="466"/>
    </location>
</feature>
<feature type="sequence conflict" description="In Ref. 1; AAC37455." evidence="3" ref="1">
    <location>
        <begin position="490"/>
        <end position="491"/>
    </location>
</feature>